<comment type="function">
    <text evidence="1">An essential GTPase which binds GTP, GDP and possibly (p)ppGpp with moderate affinity, with high nucleotide exchange rates and a fairly low GTP hydrolysis rate. Plays a role in control of the cell cycle, stress response, ribosome biogenesis and in those bacteria that undergo differentiation, in morphogenesis control.</text>
</comment>
<comment type="cofactor">
    <cofactor evidence="1">
        <name>Mg(2+)</name>
        <dbReference type="ChEBI" id="CHEBI:18420"/>
    </cofactor>
</comment>
<comment type="subunit">
    <text evidence="1">Monomer.</text>
</comment>
<comment type="subcellular location">
    <subcellularLocation>
        <location evidence="1">Cytoplasm</location>
    </subcellularLocation>
</comment>
<comment type="similarity">
    <text evidence="1">Belongs to the TRAFAC class OBG-HflX-like GTPase superfamily. OBG GTPase family.</text>
</comment>
<sequence length="430" mass="47261">MFVDQVKISLKAGDGGNGITAYRREKYVPFGGPAGGDGGIGASVVFEVDEGLRTLLDFRYQRHFKAKKGENGQSSNMHGRNAEDLVLKVPPGTIIKSVESEEVLADLVEDGQRAIVARGGRGGRGNSRFATPRNPAPDFSENGEPGEELEVTLELKLLADVGLVGFPSVGKSTLLSIVSKAKPKIGAYHFTTIKPNLGVVSTPDHRSFVMADLPGLIEGASDGVGLGHQFLRHVERTKVIVHMIDMSGSEGRNPLDDYKIINQELINYKQRLEDRPQIIVANKMDLPDSQGNLSHFKEQLDNDVTVVPVSTITRDNIDQLLYQIADKLEEVKDVDFSVEEDENLGVNRVLYKHTPSADKFTISRDDDGAYVVSGNAIERMFKMTDFNSDPAVRRFARQMRSMGIDDALRERGCSNGDIVRILGGEFEFVE</sequence>
<keyword id="KW-0963">Cytoplasm</keyword>
<keyword id="KW-0342">GTP-binding</keyword>
<keyword id="KW-0378">Hydrolase</keyword>
<keyword id="KW-0460">Magnesium</keyword>
<keyword id="KW-0479">Metal-binding</keyword>
<keyword id="KW-0547">Nucleotide-binding</keyword>
<keyword id="KW-1185">Reference proteome</keyword>
<reference key="1">
    <citation type="journal article" date="2005" name="J. Bacteriol.">
        <title>Insights on evolution of virulence and resistance from the complete genome analysis of an early methicillin-resistant Staphylococcus aureus strain and a biofilm-producing methicillin-resistant Staphylococcus epidermidis strain.</title>
        <authorList>
            <person name="Gill S.R."/>
            <person name="Fouts D.E."/>
            <person name="Archer G.L."/>
            <person name="Mongodin E.F."/>
            <person name="DeBoy R.T."/>
            <person name="Ravel J."/>
            <person name="Paulsen I.T."/>
            <person name="Kolonay J.F."/>
            <person name="Brinkac L.M."/>
            <person name="Beanan M.J."/>
            <person name="Dodson R.J."/>
            <person name="Daugherty S.C."/>
            <person name="Madupu R."/>
            <person name="Angiuoli S.V."/>
            <person name="Durkin A.S."/>
            <person name="Haft D.H."/>
            <person name="Vamathevan J.J."/>
            <person name="Khouri H."/>
            <person name="Utterback T.R."/>
            <person name="Lee C."/>
            <person name="Dimitrov G."/>
            <person name="Jiang L."/>
            <person name="Qin H."/>
            <person name="Weidman J."/>
            <person name="Tran K."/>
            <person name="Kang K.H."/>
            <person name="Hance I.R."/>
            <person name="Nelson K.E."/>
            <person name="Fraser C.M."/>
        </authorList>
    </citation>
    <scope>NUCLEOTIDE SEQUENCE [LARGE SCALE GENOMIC DNA]</scope>
    <source>
        <strain>ATCC 35984 / DSM 28319 / BCRC 17069 / CCUG 31568 / BM 3577 / RP62A</strain>
    </source>
</reference>
<proteinExistence type="inferred from homology"/>
<accession>Q5HNQ7</accession>
<protein>
    <recommendedName>
        <fullName evidence="1">GTPase Obg</fullName>
        <ecNumber evidence="1">3.6.5.-</ecNumber>
    </recommendedName>
    <alternativeName>
        <fullName evidence="1">GTP-binding protein Obg</fullName>
    </alternativeName>
</protein>
<evidence type="ECO:0000255" key="1">
    <source>
        <dbReference type="HAMAP-Rule" id="MF_01454"/>
    </source>
</evidence>
<evidence type="ECO:0000255" key="2">
    <source>
        <dbReference type="PROSITE-ProRule" id="PRU01229"/>
    </source>
</evidence>
<evidence type="ECO:0000255" key="3">
    <source>
        <dbReference type="PROSITE-ProRule" id="PRU01231"/>
    </source>
</evidence>
<evidence type="ECO:0000256" key="4">
    <source>
        <dbReference type="SAM" id="MobiDB-lite"/>
    </source>
</evidence>
<feature type="chain" id="PRO_0000386284" description="GTPase Obg">
    <location>
        <begin position="1"/>
        <end position="430"/>
    </location>
</feature>
<feature type="domain" description="Obg" evidence="3">
    <location>
        <begin position="1"/>
        <end position="158"/>
    </location>
</feature>
<feature type="domain" description="OBG-type G" evidence="1">
    <location>
        <begin position="159"/>
        <end position="329"/>
    </location>
</feature>
<feature type="domain" description="OCT" evidence="2">
    <location>
        <begin position="352"/>
        <end position="430"/>
    </location>
</feature>
<feature type="region of interest" description="Disordered" evidence="4">
    <location>
        <begin position="118"/>
        <end position="145"/>
    </location>
</feature>
<feature type="binding site" evidence="1">
    <location>
        <begin position="165"/>
        <end position="172"/>
    </location>
    <ligand>
        <name>GTP</name>
        <dbReference type="ChEBI" id="CHEBI:37565"/>
    </ligand>
</feature>
<feature type="binding site" evidence="1">
    <location>
        <position position="172"/>
    </location>
    <ligand>
        <name>Mg(2+)</name>
        <dbReference type="ChEBI" id="CHEBI:18420"/>
    </ligand>
</feature>
<feature type="binding site" evidence="1">
    <location>
        <begin position="190"/>
        <end position="194"/>
    </location>
    <ligand>
        <name>GTP</name>
        <dbReference type="ChEBI" id="CHEBI:37565"/>
    </ligand>
</feature>
<feature type="binding site" evidence="1">
    <location>
        <position position="192"/>
    </location>
    <ligand>
        <name>Mg(2+)</name>
        <dbReference type="ChEBI" id="CHEBI:18420"/>
    </ligand>
</feature>
<feature type="binding site" evidence="1">
    <location>
        <begin position="212"/>
        <end position="215"/>
    </location>
    <ligand>
        <name>GTP</name>
        <dbReference type="ChEBI" id="CHEBI:37565"/>
    </ligand>
</feature>
<feature type="binding site" evidence="1">
    <location>
        <begin position="282"/>
        <end position="285"/>
    </location>
    <ligand>
        <name>GTP</name>
        <dbReference type="ChEBI" id="CHEBI:37565"/>
    </ligand>
</feature>
<feature type="binding site" evidence="1">
    <location>
        <begin position="310"/>
        <end position="312"/>
    </location>
    <ligand>
        <name>GTP</name>
        <dbReference type="ChEBI" id="CHEBI:37565"/>
    </ligand>
</feature>
<name>OBG_STAEQ</name>
<gene>
    <name evidence="1" type="primary">obg</name>
    <name type="ordered locus">SERP1208</name>
</gene>
<dbReference type="EC" id="3.6.5.-" evidence="1"/>
<dbReference type="EMBL" id="CP000029">
    <property type="protein sequence ID" value="AAW54601.1"/>
    <property type="molecule type" value="Genomic_DNA"/>
</dbReference>
<dbReference type="SMR" id="Q5HNQ7"/>
<dbReference type="STRING" id="176279.SERP1208"/>
<dbReference type="KEGG" id="ser:SERP1208"/>
<dbReference type="eggNOG" id="COG0536">
    <property type="taxonomic scope" value="Bacteria"/>
</dbReference>
<dbReference type="HOGENOM" id="CLU_011747_2_1_9"/>
<dbReference type="Proteomes" id="UP000000531">
    <property type="component" value="Chromosome"/>
</dbReference>
<dbReference type="GO" id="GO:0005737">
    <property type="term" value="C:cytoplasm"/>
    <property type="evidence" value="ECO:0007669"/>
    <property type="project" value="UniProtKB-SubCell"/>
</dbReference>
<dbReference type="GO" id="GO:0005525">
    <property type="term" value="F:GTP binding"/>
    <property type="evidence" value="ECO:0007669"/>
    <property type="project" value="UniProtKB-UniRule"/>
</dbReference>
<dbReference type="GO" id="GO:0003924">
    <property type="term" value="F:GTPase activity"/>
    <property type="evidence" value="ECO:0007669"/>
    <property type="project" value="UniProtKB-UniRule"/>
</dbReference>
<dbReference type="GO" id="GO:0000287">
    <property type="term" value="F:magnesium ion binding"/>
    <property type="evidence" value="ECO:0007669"/>
    <property type="project" value="InterPro"/>
</dbReference>
<dbReference type="GO" id="GO:0042254">
    <property type="term" value="P:ribosome biogenesis"/>
    <property type="evidence" value="ECO:0007669"/>
    <property type="project" value="UniProtKB-UniRule"/>
</dbReference>
<dbReference type="CDD" id="cd01898">
    <property type="entry name" value="Obg"/>
    <property type="match status" value="1"/>
</dbReference>
<dbReference type="FunFam" id="2.70.210.12:FF:000001">
    <property type="entry name" value="GTPase Obg"/>
    <property type="match status" value="1"/>
</dbReference>
<dbReference type="Gene3D" id="3.30.300.350">
    <property type="entry name" value="GTP-binding protein OBG, C-terminal domain"/>
    <property type="match status" value="1"/>
</dbReference>
<dbReference type="Gene3D" id="2.70.210.12">
    <property type="entry name" value="GTP1/OBG domain"/>
    <property type="match status" value="1"/>
</dbReference>
<dbReference type="Gene3D" id="3.40.50.300">
    <property type="entry name" value="P-loop containing nucleotide triphosphate hydrolases"/>
    <property type="match status" value="1"/>
</dbReference>
<dbReference type="HAMAP" id="MF_01454">
    <property type="entry name" value="GTPase_Obg"/>
    <property type="match status" value="1"/>
</dbReference>
<dbReference type="InterPro" id="IPR031167">
    <property type="entry name" value="G_OBG"/>
</dbReference>
<dbReference type="InterPro" id="IPR006073">
    <property type="entry name" value="GTP-bd"/>
</dbReference>
<dbReference type="InterPro" id="IPR014100">
    <property type="entry name" value="GTP-bd_Obg/CgtA"/>
</dbReference>
<dbReference type="InterPro" id="IPR036346">
    <property type="entry name" value="GTP-bd_prot_GTP1/OBG_C_sf"/>
</dbReference>
<dbReference type="InterPro" id="IPR006074">
    <property type="entry name" value="GTP1-OBG_CS"/>
</dbReference>
<dbReference type="InterPro" id="IPR006169">
    <property type="entry name" value="GTP1_OBG_dom"/>
</dbReference>
<dbReference type="InterPro" id="IPR036726">
    <property type="entry name" value="GTP1_OBG_dom_sf"/>
</dbReference>
<dbReference type="InterPro" id="IPR045086">
    <property type="entry name" value="OBG_GTPase"/>
</dbReference>
<dbReference type="InterPro" id="IPR015349">
    <property type="entry name" value="OCT_dom"/>
</dbReference>
<dbReference type="InterPro" id="IPR027417">
    <property type="entry name" value="P-loop_NTPase"/>
</dbReference>
<dbReference type="NCBIfam" id="TIGR02729">
    <property type="entry name" value="Obg_CgtA"/>
    <property type="match status" value="1"/>
</dbReference>
<dbReference type="NCBIfam" id="TIGR03595">
    <property type="entry name" value="Obg_CgtA_exten"/>
    <property type="match status" value="1"/>
</dbReference>
<dbReference type="NCBIfam" id="NF008954">
    <property type="entry name" value="PRK12296.1"/>
    <property type="match status" value="1"/>
</dbReference>
<dbReference type="NCBIfam" id="NF008955">
    <property type="entry name" value="PRK12297.1"/>
    <property type="match status" value="1"/>
</dbReference>
<dbReference type="NCBIfam" id="NF008956">
    <property type="entry name" value="PRK12299.1"/>
    <property type="match status" value="1"/>
</dbReference>
<dbReference type="PANTHER" id="PTHR11702">
    <property type="entry name" value="DEVELOPMENTALLY REGULATED GTP-BINDING PROTEIN-RELATED"/>
    <property type="match status" value="1"/>
</dbReference>
<dbReference type="PANTHER" id="PTHR11702:SF31">
    <property type="entry name" value="MITOCHONDRIAL RIBOSOME-ASSOCIATED GTPASE 2"/>
    <property type="match status" value="1"/>
</dbReference>
<dbReference type="Pfam" id="PF09269">
    <property type="entry name" value="DUF1967"/>
    <property type="match status" value="1"/>
</dbReference>
<dbReference type="Pfam" id="PF01018">
    <property type="entry name" value="GTP1_OBG"/>
    <property type="match status" value="1"/>
</dbReference>
<dbReference type="Pfam" id="PF01926">
    <property type="entry name" value="MMR_HSR1"/>
    <property type="match status" value="1"/>
</dbReference>
<dbReference type="PRINTS" id="PR00326">
    <property type="entry name" value="GTP1OBG"/>
</dbReference>
<dbReference type="SUPFAM" id="SSF102741">
    <property type="entry name" value="Obg GTP-binding protein C-terminal domain"/>
    <property type="match status" value="1"/>
</dbReference>
<dbReference type="SUPFAM" id="SSF82051">
    <property type="entry name" value="Obg GTP-binding protein N-terminal domain"/>
    <property type="match status" value="1"/>
</dbReference>
<dbReference type="SUPFAM" id="SSF52540">
    <property type="entry name" value="P-loop containing nucleoside triphosphate hydrolases"/>
    <property type="match status" value="1"/>
</dbReference>
<dbReference type="PROSITE" id="PS51710">
    <property type="entry name" value="G_OBG"/>
    <property type="match status" value="1"/>
</dbReference>
<dbReference type="PROSITE" id="PS00905">
    <property type="entry name" value="GTP1_OBG"/>
    <property type="match status" value="1"/>
</dbReference>
<dbReference type="PROSITE" id="PS51883">
    <property type="entry name" value="OBG"/>
    <property type="match status" value="1"/>
</dbReference>
<dbReference type="PROSITE" id="PS51881">
    <property type="entry name" value="OCT"/>
    <property type="match status" value="1"/>
</dbReference>
<organism>
    <name type="scientific">Staphylococcus epidermidis (strain ATCC 35984 / DSM 28319 / BCRC 17069 / CCUG 31568 / BM 3577 / RP62A)</name>
    <dbReference type="NCBI Taxonomy" id="176279"/>
    <lineage>
        <taxon>Bacteria</taxon>
        <taxon>Bacillati</taxon>
        <taxon>Bacillota</taxon>
        <taxon>Bacilli</taxon>
        <taxon>Bacillales</taxon>
        <taxon>Staphylococcaceae</taxon>
        <taxon>Staphylococcus</taxon>
    </lineage>
</organism>